<feature type="chain" id="PRO_0000350111" description="Probable dual-specificity RNA methyltransferase RlmN">
    <location>
        <begin position="1"/>
        <end position="353"/>
    </location>
</feature>
<feature type="domain" description="Radical SAM core" evidence="2">
    <location>
        <begin position="96"/>
        <end position="326"/>
    </location>
</feature>
<feature type="active site" description="Proton acceptor" evidence="1">
    <location>
        <position position="90"/>
    </location>
</feature>
<feature type="active site" description="S-methylcysteine intermediate" evidence="1">
    <location>
        <position position="331"/>
    </location>
</feature>
<feature type="binding site" evidence="1">
    <location>
        <position position="110"/>
    </location>
    <ligand>
        <name>[4Fe-4S] cluster</name>
        <dbReference type="ChEBI" id="CHEBI:49883"/>
        <note>4Fe-4S-S-AdoMet</note>
    </ligand>
</feature>
<feature type="binding site" evidence="1">
    <location>
        <position position="114"/>
    </location>
    <ligand>
        <name>[4Fe-4S] cluster</name>
        <dbReference type="ChEBI" id="CHEBI:49883"/>
        <note>4Fe-4S-S-AdoMet</note>
    </ligand>
</feature>
<feature type="binding site" evidence="1">
    <location>
        <position position="117"/>
    </location>
    <ligand>
        <name>[4Fe-4S] cluster</name>
        <dbReference type="ChEBI" id="CHEBI:49883"/>
        <note>4Fe-4S-S-AdoMet</note>
    </ligand>
</feature>
<feature type="binding site" evidence="1">
    <location>
        <begin position="157"/>
        <end position="158"/>
    </location>
    <ligand>
        <name>S-adenosyl-L-methionine</name>
        <dbReference type="ChEBI" id="CHEBI:59789"/>
    </ligand>
</feature>
<feature type="binding site" evidence="1">
    <location>
        <position position="189"/>
    </location>
    <ligand>
        <name>S-adenosyl-L-methionine</name>
        <dbReference type="ChEBI" id="CHEBI:59789"/>
    </ligand>
</feature>
<feature type="binding site" evidence="1">
    <location>
        <begin position="212"/>
        <end position="214"/>
    </location>
    <ligand>
        <name>S-adenosyl-L-methionine</name>
        <dbReference type="ChEBI" id="CHEBI:59789"/>
    </ligand>
</feature>
<feature type="binding site" evidence="1">
    <location>
        <position position="288"/>
    </location>
    <ligand>
        <name>S-adenosyl-L-methionine</name>
        <dbReference type="ChEBI" id="CHEBI:59789"/>
    </ligand>
</feature>
<feature type="disulfide bond" description="(transient)" evidence="1">
    <location>
        <begin position="103"/>
        <end position="331"/>
    </location>
</feature>
<name>RLMN_CLOB8</name>
<comment type="function">
    <text evidence="1">Specifically methylates position 2 of adenine 2503 in 23S rRNA and position 2 of adenine 37 in tRNAs.</text>
</comment>
<comment type="catalytic activity">
    <reaction evidence="1">
        <text>adenosine(2503) in 23S rRNA + 2 reduced [2Fe-2S]-[ferredoxin] + 2 S-adenosyl-L-methionine = 2-methyladenosine(2503) in 23S rRNA + 5'-deoxyadenosine + L-methionine + 2 oxidized [2Fe-2S]-[ferredoxin] + S-adenosyl-L-homocysteine</text>
        <dbReference type="Rhea" id="RHEA:42916"/>
        <dbReference type="Rhea" id="RHEA-COMP:10000"/>
        <dbReference type="Rhea" id="RHEA-COMP:10001"/>
        <dbReference type="Rhea" id="RHEA-COMP:10152"/>
        <dbReference type="Rhea" id="RHEA-COMP:10282"/>
        <dbReference type="ChEBI" id="CHEBI:17319"/>
        <dbReference type="ChEBI" id="CHEBI:33737"/>
        <dbReference type="ChEBI" id="CHEBI:33738"/>
        <dbReference type="ChEBI" id="CHEBI:57844"/>
        <dbReference type="ChEBI" id="CHEBI:57856"/>
        <dbReference type="ChEBI" id="CHEBI:59789"/>
        <dbReference type="ChEBI" id="CHEBI:74411"/>
        <dbReference type="ChEBI" id="CHEBI:74497"/>
        <dbReference type="EC" id="2.1.1.192"/>
    </reaction>
</comment>
<comment type="catalytic activity">
    <reaction evidence="1">
        <text>adenosine(37) in tRNA + 2 reduced [2Fe-2S]-[ferredoxin] + 2 S-adenosyl-L-methionine = 2-methyladenosine(37) in tRNA + 5'-deoxyadenosine + L-methionine + 2 oxidized [2Fe-2S]-[ferredoxin] + S-adenosyl-L-homocysteine</text>
        <dbReference type="Rhea" id="RHEA:43332"/>
        <dbReference type="Rhea" id="RHEA-COMP:10000"/>
        <dbReference type="Rhea" id="RHEA-COMP:10001"/>
        <dbReference type="Rhea" id="RHEA-COMP:10162"/>
        <dbReference type="Rhea" id="RHEA-COMP:10485"/>
        <dbReference type="ChEBI" id="CHEBI:17319"/>
        <dbReference type="ChEBI" id="CHEBI:33737"/>
        <dbReference type="ChEBI" id="CHEBI:33738"/>
        <dbReference type="ChEBI" id="CHEBI:57844"/>
        <dbReference type="ChEBI" id="CHEBI:57856"/>
        <dbReference type="ChEBI" id="CHEBI:59789"/>
        <dbReference type="ChEBI" id="CHEBI:74411"/>
        <dbReference type="ChEBI" id="CHEBI:74497"/>
        <dbReference type="EC" id="2.1.1.192"/>
    </reaction>
</comment>
<comment type="cofactor">
    <cofactor evidence="1">
        <name>[4Fe-4S] cluster</name>
        <dbReference type="ChEBI" id="CHEBI:49883"/>
    </cofactor>
    <text evidence="1">Binds 1 [4Fe-4S] cluster. The cluster is coordinated with 3 cysteines and an exchangeable S-adenosyl-L-methionine.</text>
</comment>
<comment type="subcellular location">
    <subcellularLocation>
        <location evidence="1">Cytoplasm</location>
    </subcellularLocation>
</comment>
<comment type="miscellaneous">
    <text evidence="1">Reaction proceeds by a ping-pong mechanism involving intermediate methylation of a conserved cysteine residue.</text>
</comment>
<comment type="similarity">
    <text evidence="1">Belongs to the radical SAM superfamily. RlmN family.</text>
</comment>
<sequence length="353" mass="40120">MNNLLDFTLEELKAWMKENGESAFRGQQILSWIYKGVKEFDNMKNIPKPLVQKLKENFFVGLPKIIEVYKSNIDGTEKFLLGFKDGNLIESVLMRYKHGNSICISTQVGCAMGCKFCASTIEGKVRNLTTGEILSQIMVVQDYINERISNVVLMGSGEPLDNYNNVIKFLEIVSAEYALNIGQRHITLSTCGIVPKIYELADKELSITLALSLHAFSNDKRKEIMPIANRYSIEEILEACRYYINKTNRRITFEYALVKDVNDGREDAKALGKLLKGMLCHVNLIPVNEIKENTYKRSSKKAIEDFSEILKNHGIEVTTRREMGSDINAACGQLRRSYINTQEIEGEQNGRFS</sequence>
<protein>
    <recommendedName>
        <fullName evidence="1">Probable dual-specificity RNA methyltransferase RlmN</fullName>
        <ecNumber evidence="1">2.1.1.192</ecNumber>
    </recommendedName>
    <alternativeName>
        <fullName evidence="1">23S rRNA (adenine(2503)-C(2))-methyltransferase</fullName>
    </alternativeName>
    <alternativeName>
        <fullName evidence="1">23S rRNA m2A2503 methyltransferase</fullName>
    </alternativeName>
    <alternativeName>
        <fullName evidence="1">Ribosomal RNA large subunit methyltransferase N</fullName>
    </alternativeName>
    <alternativeName>
        <fullName evidence="1">tRNA (adenine(37)-C(2))-methyltransferase</fullName>
    </alternativeName>
    <alternativeName>
        <fullName evidence="1">tRNA m2A37 methyltransferase</fullName>
    </alternativeName>
</protein>
<accession>A6LSK1</accession>
<evidence type="ECO:0000255" key="1">
    <source>
        <dbReference type="HAMAP-Rule" id="MF_01849"/>
    </source>
</evidence>
<evidence type="ECO:0000255" key="2">
    <source>
        <dbReference type="PROSITE-ProRule" id="PRU01266"/>
    </source>
</evidence>
<proteinExistence type="inferred from homology"/>
<keyword id="KW-0004">4Fe-4S</keyword>
<keyword id="KW-0963">Cytoplasm</keyword>
<keyword id="KW-1015">Disulfide bond</keyword>
<keyword id="KW-0408">Iron</keyword>
<keyword id="KW-0411">Iron-sulfur</keyword>
<keyword id="KW-0479">Metal-binding</keyword>
<keyword id="KW-0489">Methyltransferase</keyword>
<keyword id="KW-0698">rRNA processing</keyword>
<keyword id="KW-0949">S-adenosyl-L-methionine</keyword>
<keyword id="KW-0808">Transferase</keyword>
<keyword id="KW-0819">tRNA processing</keyword>
<dbReference type="EC" id="2.1.1.192" evidence="1"/>
<dbReference type="EMBL" id="CP000721">
    <property type="protein sequence ID" value="ABR33331.1"/>
    <property type="molecule type" value="Genomic_DNA"/>
</dbReference>
<dbReference type="RefSeq" id="WP_011968489.1">
    <property type="nucleotide sequence ID" value="NC_009617.1"/>
</dbReference>
<dbReference type="SMR" id="A6LSK1"/>
<dbReference type="GeneID" id="66344137"/>
<dbReference type="KEGG" id="cbe:Cbei_1149"/>
<dbReference type="eggNOG" id="COG0820">
    <property type="taxonomic scope" value="Bacteria"/>
</dbReference>
<dbReference type="HOGENOM" id="CLU_029101_0_1_9"/>
<dbReference type="Proteomes" id="UP000000565">
    <property type="component" value="Chromosome"/>
</dbReference>
<dbReference type="GO" id="GO:0005737">
    <property type="term" value="C:cytoplasm"/>
    <property type="evidence" value="ECO:0007669"/>
    <property type="project" value="UniProtKB-SubCell"/>
</dbReference>
<dbReference type="GO" id="GO:0051539">
    <property type="term" value="F:4 iron, 4 sulfur cluster binding"/>
    <property type="evidence" value="ECO:0007669"/>
    <property type="project" value="UniProtKB-UniRule"/>
</dbReference>
<dbReference type="GO" id="GO:0046872">
    <property type="term" value="F:metal ion binding"/>
    <property type="evidence" value="ECO:0007669"/>
    <property type="project" value="UniProtKB-KW"/>
</dbReference>
<dbReference type="GO" id="GO:0070040">
    <property type="term" value="F:rRNA (adenine(2503)-C2-)-methyltransferase activity"/>
    <property type="evidence" value="ECO:0007669"/>
    <property type="project" value="UniProtKB-UniRule"/>
</dbReference>
<dbReference type="GO" id="GO:0019843">
    <property type="term" value="F:rRNA binding"/>
    <property type="evidence" value="ECO:0007669"/>
    <property type="project" value="UniProtKB-UniRule"/>
</dbReference>
<dbReference type="GO" id="GO:0002935">
    <property type="term" value="F:tRNA (adenine(37)-C2)-methyltransferase activity"/>
    <property type="evidence" value="ECO:0007669"/>
    <property type="project" value="UniProtKB-UniRule"/>
</dbReference>
<dbReference type="GO" id="GO:0000049">
    <property type="term" value="F:tRNA binding"/>
    <property type="evidence" value="ECO:0007669"/>
    <property type="project" value="UniProtKB-UniRule"/>
</dbReference>
<dbReference type="GO" id="GO:0070475">
    <property type="term" value="P:rRNA base methylation"/>
    <property type="evidence" value="ECO:0007669"/>
    <property type="project" value="UniProtKB-UniRule"/>
</dbReference>
<dbReference type="GO" id="GO:0030488">
    <property type="term" value="P:tRNA methylation"/>
    <property type="evidence" value="ECO:0007669"/>
    <property type="project" value="UniProtKB-UniRule"/>
</dbReference>
<dbReference type="CDD" id="cd01335">
    <property type="entry name" value="Radical_SAM"/>
    <property type="match status" value="1"/>
</dbReference>
<dbReference type="FunFam" id="3.20.20.70:FF:000014">
    <property type="entry name" value="Probable dual-specificity RNA methyltransferase RlmN"/>
    <property type="match status" value="1"/>
</dbReference>
<dbReference type="Gene3D" id="1.10.150.530">
    <property type="match status" value="1"/>
</dbReference>
<dbReference type="Gene3D" id="3.20.20.70">
    <property type="entry name" value="Aldolase class I"/>
    <property type="match status" value="1"/>
</dbReference>
<dbReference type="HAMAP" id="MF_01849">
    <property type="entry name" value="RNA_methyltr_RlmN"/>
    <property type="match status" value="1"/>
</dbReference>
<dbReference type="InterPro" id="IPR013785">
    <property type="entry name" value="Aldolase_TIM"/>
</dbReference>
<dbReference type="InterPro" id="IPR040072">
    <property type="entry name" value="Methyltransferase_A"/>
</dbReference>
<dbReference type="InterPro" id="IPR048641">
    <property type="entry name" value="RlmN_N"/>
</dbReference>
<dbReference type="InterPro" id="IPR027492">
    <property type="entry name" value="RNA_MTrfase_RlmN"/>
</dbReference>
<dbReference type="InterPro" id="IPR004383">
    <property type="entry name" value="rRNA_lsu_MTrfase_RlmN/Cfr"/>
</dbReference>
<dbReference type="InterPro" id="IPR007197">
    <property type="entry name" value="rSAM"/>
</dbReference>
<dbReference type="NCBIfam" id="TIGR00048">
    <property type="entry name" value="rRNA_mod_RlmN"/>
    <property type="match status" value="1"/>
</dbReference>
<dbReference type="PANTHER" id="PTHR30544">
    <property type="entry name" value="23S RRNA METHYLTRANSFERASE"/>
    <property type="match status" value="1"/>
</dbReference>
<dbReference type="PANTHER" id="PTHR30544:SF5">
    <property type="entry name" value="RADICAL SAM CORE DOMAIN-CONTAINING PROTEIN"/>
    <property type="match status" value="1"/>
</dbReference>
<dbReference type="Pfam" id="PF04055">
    <property type="entry name" value="Radical_SAM"/>
    <property type="match status" value="1"/>
</dbReference>
<dbReference type="Pfam" id="PF21016">
    <property type="entry name" value="RlmN_N"/>
    <property type="match status" value="1"/>
</dbReference>
<dbReference type="PIRSF" id="PIRSF006004">
    <property type="entry name" value="CHP00048"/>
    <property type="match status" value="1"/>
</dbReference>
<dbReference type="SFLD" id="SFLDF00275">
    <property type="entry name" value="adenosine_C2_methyltransferase"/>
    <property type="match status" value="1"/>
</dbReference>
<dbReference type="SFLD" id="SFLDG01062">
    <property type="entry name" value="methyltransferase_(Class_A)"/>
    <property type="match status" value="1"/>
</dbReference>
<dbReference type="SUPFAM" id="SSF102114">
    <property type="entry name" value="Radical SAM enzymes"/>
    <property type="match status" value="1"/>
</dbReference>
<dbReference type="PROSITE" id="PS51918">
    <property type="entry name" value="RADICAL_SAM"/>
    <property type="match status" value="1"/>
</dbReference>
<reference key="1">
    <citation type="submission" date="2007-06" db="EMBL/GenBank/DDBJ databases">
        <title>Complete sequence of Clostridium beijerinckii NCIMB 8052.</title>
        <authorList>
            <consortium name="US DOE Joint Genome Institute"/>
            <person name="Copeland A."/>
            <person name="Lucas S."/>
            <person name="Lapidus A."/>
            <person name="Barry K."/>
            <person name="Detter J.C."/>
            <person name="Glavina del Rio T."/>
            <person name="Hammon N."/>
            <person name="Israni S."/>
            <person name="Dalin E."/>
            <person name="Tice H."/>
            <person name="Pitluck S."/>
            <person name="Sims D."/>
            <person name="Brettin T."/>
            <person name="Bruce D."/>
            <person name="Tapia R."/>
            <person name="Brainard J."/>
            <person name="Schmutz J."/>
            <person name="Larimer F."/>
            <person name="Land M."/>
            <person name="Hauser L."/>
            <person name="Kyrpides N."/>
            <person name="Mikhailova N."/>
            <person name="Bennet G."/>
            <person name="Cann I."/>
            <person name="Chen J.-S."/>
            <person name="Contreras A.L."/>
            <person name="Jones D."/>
            <person name="Kashket E."/>
            <person name="Mitchell W."/>
            <person name="Stoddard S."/>
            <person name="Schwarz W."/>
            <person name="Qureshi N."/>
            <person name="Young M."/>
            <person name="Shi Z."/>
            <person name="Ezeji T."/>
            <person name="White B."/>
            <person name="Blaschek H."/>
            <person name="Richardson P."/>
        </authorList>
    </citation>
    <scope>NUCLEOTIDE SEQUENCE [LARGE SCALE GENOMIC DNA]</scope>
    <source>
        <strain>ATCC 51743 / NCIMB 8052</strain>
    </source>
</reference>
<organism>
    <name type="scientific">Clostridium beijerinckii (strain ATCC 51743 / NCIMB 8052)</name>
    <name type="common">Clostridium acetobutylicum</name>
    <dbReference type="NCBI Taxonomy" id="290402"/>
    <lineage>
        <taxon>Bacteria</taxon>
        <taxon>Bacillati</taxon>
        <taxon>Bacillota</taxon>
        <taxon>Clostridia</taxon>
        <taxon>Eubacteriales</taxon>
        <taxon>Clostridiaceae</taxon>
        <taxon>Clostridium</taxon>
    </lineage>
</organism>
<gene>
    <name evidence="1" type="primary">rlmN</name>
    <name type="ordered locus">Cbei_1149</name>
</gene>